<evidence type="ECO:0000255" key="1">
    <source>
        <dbReference type="HAMAP-Rule" id="MF_01693"/>
    </source>
</evidence>
<sequence>MTSASASLERFAANKLAGLDRRNLRRRTRETRPLGGALVERDGRQLVNACSNDYLGLSQHPAVIEAAAAAARQFGAGSGASRLVTGGHPLLFELEARLAAFKGTEDCLVFGSGYLANLAITPALVGSGDIIFVDTLAHACLHAGARLSGARVEVFPHNDMAALEAMLKTLRPVHRHAMILTDGVFSMDGDLAPLPDMMALAQTHDAWTLIDDAHGIGVIGGGHGSTHAFQPSVVPPLQMGTLSKALGSYGGYVCASRDVCDLLRTRARPLVFTTALPPASIGAALAALDLIEQDSALRERPMDLARRFCRTLGLAEPNSPIVPIIIGDESAALSASAELEDAGFLVTAIRPPTVPRRTARLRITFNAAHSEADIDRLATTLKSILQTAEAAE</sequence>
<dbReference type="EC" id="2.3.1.47" evidence="1"/>
<dbReference type="EMBL" id="CP000449">
    <property type="protein sequence ID" value="ABI65638.1"/>
    <property type="molecule type" value="Genomic_DNA"/>
</dbReference>
<dbReference type="RefSeq" id="WP_011643285.1">
    <property type="nucleotide sequence ID" value="NC_008347.1"/>
</dbReference>
<dbReference type="SMR" id="Q0APZ9"/>
<dbReference type="STRING" id="394221.Mmar10_1346"/>
<dbReference type="KEGG" id="mmr:Mmar10_1346"/>
<dbReference type="eggNOG" id="COG0156">
    <property type="taxonomic scope" value="Bacteria"/>
</dbReference>
<dbReference type="HOGENOM" id="CLU_015846_11_0_5"/>
<dbReference type="OrthoDB" id="9807157at2"/>
<dbReference type="UniPathway" id="UPA00078"/>
<dbReference type="Proteomes" id="UP000001964">
    <property type="component" value="Chromosome"/>
</dbReference>
<dbReference type="GO" id="GO:0008710">
    <property type="term" value="F:8-amino-7-oxononanoate synthase activity"/>
    <property type="evidence" value="ECO:0007669"/>
    <property type="project" value="UniProtKB-UniRule"/>
</dbReference>
<dbReference type="GO" id="GO:0030170">
    <property type="term" value="F:pyridoxal phosphate binding"/>
    <property type="evidence" value="ECO:0007669"/>
    <property type="project" value="UniProtKB-UniRule"/>
</dbReference>
<dbReference type="GO" id="GO:0009102">
    <property type="term" value="P:biotin biosynthetic process"/>
    <property type="evidence" value="ECO:0007669"/>
    <property type="project" value="UniProtKB-UniRule"/>
</dbReference>
<dbReference type="Gene3D" id="3.90.1150.10">
    <property type="entry name" value="Aspartate Aminotransferase, domain 1"/>
    <property type="match status" value="1"/>
</dbReference>
<dbReference type="Gene3D" id="3.40.640.10">
    <property type="entry name" value="Type I PLP-dependent aspartate aminotransferase-like (Major domain)"/>
    <property type="match status" value="1"/>
</dbReference>
<dbReference type="HAMAP" id="MF_01693">
    <property type="entry name" value="BioF_aminotrans_2"/>
    <property type="match status" value="1"/>
</dbReference>
<dbReference type="InterPro" id="IPR001917">
    <property type="entry name" value="Aminotrans_II_pyridoxalP_BS"/>
</dbReference>
<dbReference type="InterPro" id="IPR004839">
    <property type="entry name" value="Aminotransferase_I/II_large"/>
</dbReference>
<dbReference type="InterPro" id="IPR050087">
    <property type="entry name" value="AON_synthase_class-II"/>
</dbReference>
<dbReference type="InterPro" id="IPR004723">
    <property type="entry name" value="AONS_Archaea/Proteobacteria"/>
</dbReference>
<dbReference type="InterPro" id="IPR022834">
    <property type="entry name" value="AONS_Proteobacteria"/>
</dbReference>
<dbReference type="InterPro" id="IPR015424">
    <property type="entry name" value="PyrdxlP-dep_Trfase"/>
</dbReference>
<dbReference type="InterPro" id="IPR015421">
    <property type="entry name" value="PyrdxlP-dep_Trfase_major"/>
</dbReference>
<dbReference type="InterPro" id="IPR015422">
    <property type="entry name" value="PyrdxlP-dep_Trfase_small"/>
</dbReference>
<dbReference type="NCBIfam" id="TIGR00858">
    <property type="entry name" value="bioF"/>
    <property type="match status" value="1"/>
</dbReference>
<dbReference type="PANTHER" id="PTHR13693:SF100">
    <property type="entry name" value="8-AMINO-7-OXONONANOATE SYNTHASE"/>
    <property type="match status" value="1"/>
</dbReference>
<dbReference type="PANTHER" id="PTHR13693">
    <property type="entry name" value="CLASS II AMINOTRANSFERASE/8-AMINO-7-OXONONANOATE SYNTHASE"/>
    <property type="match status" value="1"/>
</dbReference>
<dbReference type="Pfam" id="PF00155">
    <property type="entry name" value="Aminotran_1_2"/>
    <property type="match status" value="1"/>
</dbReference>
<dbReference type="SUPFAM" id="SSF53383">
    <property type="entry name" value="PLP-dependent transferases"/>
    <property type="match status" value="1"/>
</dbReference>
<dbReference type="PROSITE" id="PS00599">
    <property type="entry name" value="AA_TRANSFER_CLASS_2"/>
    <property type="match status" value="1"/>
</dbReference>
<comment type="function">
    <text evidence="1">Catalyzes the decarboxylative condensation of pimeloyl-[acyl-carrier protein] and L-alanine to produce 8-amino-7-oxononanoate (AON), [acyl-carrier protein], and carbon dioxide.</text>
</comment>
<comment type="catalytic activity">
    <reaction evidence="1">
        <text>6-carboxyhexanoyl-[ACP] + L-alanine + H(+) = (8S)-8-amino-7-oxononanoate + holo-[ACP] + CO2</text>
        <dbReference type="Rhea" id="RHEA:42288"/>
        <dbReference type="Rhea" id="RHEA-COMP:9685"/>
        <dbReference type="Rhea" id="RHEA-COMP:9955"/>
        <dbReference type="ChEBI" id="CHEBI:15378"/>
        <dbReference type="ChEBI" id="CHEBI:16526"/>
        <dbReference type="ChEBI" id="CHEBI:57972"/>
        <dbReference type="ChEBI" id="CHEBI:64479"/>
        <dbReference type="ChEBI" id="CHEBI:78846"/>
        <dbReference type="ChEBI" id="CHEBI:149468"/>
        <dbReference type="EC" id="2.3.1.47"/>
    </reaction>
</comment>
<comment type="cofactor">
    <cofactor evidence="1">
        <name>pyridoxal 5'-phosphate</name>
        <dbReference type="ChEBI" id="CHEBI:597326"/>
    </cofactor>
</comment>
<comment type="pathway">
    <text evidence="1">Cofactor biosynthesis; biotin biosynthesis.</text>
</comment>
<comment type="subunit">
    <text evidence="1">Homodimer.</text>
</comment>
<comment type="similarity">
    <text evidence="1">Belongs to the class-II pyridoxal-phosphate-dependent aminotransferase family. BioF subfamily.</text>
</comment>
<protein>
    <recommendedName>
        <fullName evidence="1">8-amino-7-oxononanoate synthase</fullName>
        <shortName evidence="1">AONS</shortName>
        <ecNumber evidence="1">2.3.1.47</ecNumber>
    </recommendedName>
    <alternativeName>
        <fullName evidence="1">7-keto-8-amino-pelargonic acid synthase</fullName>
        <shortName evidence="1">7-KAP synthase</shortName>
        <shortName evidence="1">KAPA synthase</shortName>
    </alternativeName>
    <alternativeName>
        <fullName evidence="1">8-amino-7-ketopelargonate synthase</fullName>
    </alternativeName>
</protein>
<feature type="chain" id="PRO_0000381018" description="8-amino-7-oxononanoate synthase">
    <location>
        <begin position="1"/>
        <end position="392"/>
    </location>
</feature>
<feature type="binding site" evidence="1">
    <location>
        <position position="26"/>
    </location>
    <ligand>
        <name>substrate</name>
    </ligand>
</feature>
<feature type="binding site" evidence="1">
    <location>
        <begin position="113"/>
        <end position="114"/>
    </location>
    <ligand>
        <name>pyridoxal 5'-phosphate</name>
        <dbReference type="ChEBI" id="CHEBI:597326"/>
    </ligand>
</feature>
<feature type="binding site" evidence="1">
    <location>
        <position position="138"/>
    </location>
    <ligand>
        <name>substrate</name>
    </ligand>
</feature>
<feature type="binding site" evidence="1">
    <location>
        <position position="186"/>
    </location>
    <ligand>
        <name>pyridoxal 5'-phosphate</name>
        <dbReference type="ChEBI" id="CHEBI:597326"/>
    </ligand>
</feature>
<feature type="binding site" evidence="1">
    <location>
        <position position="214"/>
    </location>
    <ligand>
        <name>pyridoxal 5'-phosphate</name>
        <dbReference type="ChEBI" id="CHEBI:597326"/>
    </ligand>
</feature>
<feature type="binding site" evidence="1">
    <location>
        <position position="241"/>
    </location>
    <ligand>
        <name>pyridoxal 5'-phosphate</name>
        <dbReference type="ChEBI" id="CHEBI:597326"/>
    </ligand>
</feature>
<feature type="binding site" evidence="1">
    <location>
        <position position="353"/>
    </location>
    <ligand>
        <name>substrate</name>
    </ligand>
</feature>
<feature type="modified residue" description="N6-(pyridoxal phosphate)lysine" evidence="1">
    <location>
        <position position="244"/>
    </location>
</feature>
<organism>
    <name type="scientific">Maricaulis maris (strain MCS10)</name>
    <name type="common">Caulobacter maris</name>
    <dbReference type="NCBI Taxonomy" id="394221"/>
    <lineage>
        <taxon>Bacteria</taxon>
        <taxon>Pseudomonadati</taxon>
        <taxon>Pseudomonadota</taxon>
        <taxon>Alphaproteobacteria</taxon>
        <taxon>Maricaulales</taxon>
        <taxon>Maricaulaceae</taxon>
        <taxon>Maricaulis</taxon>
    </lineage>
</organism>
<accession>Q0APZ9</accession>
<gene>
    <name evidence="1" type="primary">bioF</name>
    <name type="ordered locus">Mmar10_1346</name>
</gene>
<name>BIOF_MARMM</name>
<reference key="1">
    <citation type="submission" date="2006-08" db="EMBL/GenBank/DDBJ databases">
        <title>Complete sequence of Maricaulis maris MCS10.</title>
        <authorList>
            <consortium name="US DOE Joint Genome Institute"/>
            <person name="Copeland A."/>
            <person name="Lucas S."/>
            <person name="Lapidus A."/>
            <person name="Barry K."/>
            <person name="Detter J.C."/>
            <person name="Glavina del Rio T."/>
            <person name="Hammon N."/>
            <person name="Israni S."/>
            <person name="Dalin E."/>
            <person name="Tice H."/>
            <person name="Pitluck S."/>
            <person name="Saunders E."/>
            <person name="Brettin T."/>
            <person name="Bruce D."/>
            <person name="Han C."/>
            <person name="Tapia R."/>
            <person name="Gilna P."/>
            <person name="Schmutz J."/>
            <person name="Larimer F."/>
            <person name="Land M."/>
            <person name="Hauser L."/>
            <person name="Kyrpides N."/>
            <person name="Mikhailova N."/>
            <person name="Viollier P."/>
            <person name="Stephens C."/>
            <person name="Richardson P."/>
        </authorList>
    </citation>
    <scope>NUCLEOTIDE SEQUENCE [LARGE SCALE GENOMIC DNA]</scope>
    <source>
        <strain>MCS10</strain>
    </source>
</reference>
<proteinExistence type="inferred from homology"/>
<keyword id="KW-0093">Biotin biosynthesis</keyword>
<keyword id="KW-0663">Pyridoxal phosphate</keyword>
<keyword id="KW-1185">Reference proteome</keyword>
<keyword id="KW-0808">Transferase</keyword>